<organism>
    <name type="scientific">Homo sapiens</name>
    <name type="common">Human</name>
    <dbReference type="NCBI Taxonomy" id="9606"/>
    <lineage>
        <taxon>Eukaryota</taxon>
        <taxon>Metazoa</taxon>
        <taxon>Chordata</taxon>
        <taxon>Craniata</taxon>
        <taxon>Vertebrata</taxon>
        <taxon>Euteleostomi</taxon>
        <taxon>Mammalia</taxon>
        <taxon>Eutheria</taxon>
        <taxon>Euarchontoglires</taxon>
        <taxon>Primates</taxon>
        <taxon>Haplorrhini</taxon>
        <taxon>Catarrhini</taxon>
        <taxon>Hominidae</taxon>
        <taxon>Homo</taxon>
    </lineage>
</organism>
<evidence type="ECO:0000250" key="1">
    <source>
        <dbReference type="UniProtKB" id="O70325"/>
    </source>
</evidence>
<evidence type="ECO:0000269" key="2">
    <source>
    </source>
</evidence>
<evidence type="ECO:0000269" key="3">
    <source>
    </source>
</evidence>
<evidence type="ECO:0000269" key="4">
    <source>
    </source>
</evidence>
<evidence type="ECO:0000269" key="5">
    <source ref="4"/>
</evidence>
<evidence type="ECO:0000303" key="6">
    <source>
    </source>
</evidence>
<evidence type="ECO:0000303" key="7">
    <source>
    </source>
</evidence>
<evidence type="ECO:0000303" key="8">
    <source ref="9"/>
</evidence>
<evidence type="ECO:0000305" key="9"/>
<evidence type="ECO:0000305" key="10">
    <source>
    </source>
</evidence>
<evidence type="ECO:0000312" key="11">
    <source>
        <dbReference type="HGNC" id="HGNC:4554"/>
    </source>
</evidence>
<evidence type="ECO:0007829" key="12">
    <source>
        <dbReference type="PDB" id="2HE3"/>
    </source>
</evidence>
<accession>P18283</accession>
<accession>Q6PJ52</accession>
<accession>Q8WWI7</accession>
<accession>Q9NRP9</accession>
<dbReference type="EC" id="1.11.1.9" evidence="4"/>
<dbReference type="EC" id="1.11.1.12" evidence="3"/>
<dbReference type="EMBL" id="X53463">
    <property type="protein sequence ID" value="CAB43534.1"/>
    <property type="molecule type" value="mRNA"/>
</dbReference>
<dbReference type="EMBL" id="X68314">
    <property type="protein sequence ID" value="CAA48394.1"/>
    <property type="molecule type" value="mRNA"/>
</dbReference>
<dbReference type="EMBL" id="AF199441">
    <property type="protein sequence ID" value="AAF74026.1"/>
    <property type="molecule type" value="Genomic_DNA"/>
</dbReference>
<dbReference type="EMBL" id="AY785560">
    <property type="protein sequence ID" value="AAV31780.1"/>
    <property type="molecule type" value="Genomic_DNA"/>
</dbReference>
<dbReference type="EMBL" id="AL139022">
    <property type="status" value="NOT_ANNOTATED_CDS"/>
    <property type="molecule type" value="Genomic_DNA"/>
</dbReference>
<dbReference type="EMBL" id="BC005277">
    <property type="protein sequence ID" value="AAH05277.1"/>
    <property type="molecule type" value="mRNA"/>
</dbReference>
<dbReference type="EMBL" id="BC016756">
    <property type="protein sequence ID" value="AAH16756.1"/>
    <property type="molecule type" value="mRNA"/>
</dbReference>
<dbReference type="EMBL" id="BC022820">
    <property type="protein sequence ID" value="AAH22820.2"/>
    <property type="molecule type" value="mRNA"/>
</dbReference>
<dbReference type="EMBL" id="BC067221">
    <property type="protein sequence ID" value="AAH67221.1"/>
    <property type="molecule type" value="mRNA"/>
</dbReference>
<dbReference type="CCDS" id="CCDS41964.1"/>
<dbReference type="PIR" id="A45207">
    <property type="entry name" value="A45207"/>
</dbReference>
<dbReference type="RefSeq" id="NP_002074.2">
    <property type="nucleotide sequence ID" value="NM_002083.3"/>
</dbReference>
<dbReference type="PDB" id="2HE3">
    <property type="method" value="X-ray"/>
    <property type="resolution" value="2.10 A"/>
    <property type="chains" value="A=4-188"/>
</dbReference>
<dbReference type="PDBsum" id="2HE3"/>
<dbReference type="SMR" id="P18283"/>
<dbReference type="BioGRID" id="109135">
    <property type="interactions" value="3"/>
</dbReference>
<dbReference type="FunCoup" id="P18283">
    <property type="interactions" value="483"/>
</dbReference>
<dbReference type="IntAct" id="P18283">
    <property type="interactions" value="5"/>
</dbReference>
<dbReference type="MINT" id="P18283"/>
<dbReference type="STRING" id="9606.ENSP00000374265"/>
<dbReference type="DrugBank" id="DB09096">
    <property type="generic name" value="Benzoyl peroxide"/>
</dbReference>
<dbReference type="DrugBank" id="DB00143">
    <property type="generic name" value="Glutathione"/>
</dbReference>
<dbReference type="DrugBank" id="DB03310">
    <property type="generic name" value="Glutathione disulfide"/>
</dbReference>
<dbReference type="PeroxiBase" id="3601">
    <property type="entry name" value="HsGPx02"/>
</dbReference>
<dbReference type="GlyGen" id="P18283">
    <property type="glycosylation" value="1 site"/>
</dbReference>
<dbReference type="iPTMnet" id="P18283"/>
<dbReference type="PhosphoSitePlus" id="P18283"/>
<dbReference type="BioMuta" id="GPX2"/>
<dbReference type="DMDM" id="172046064"/>
<dbReference type="jPOST" id="P18283"/>
<dbReference type="MassIVE" id="P18283"/>
<dbReference type="PaxDb" id="9606-ENSP00000374265"/>
<dbReference type="PeptideAtlas" id="P18283"/>
<dbReference type="ProteomicsDB" id="53556"/>
<dbReference type="Antibodypedia" id="47304">
    <property type="antibodies" value="187 antibodies from 30 providers"/>
</dbReference>
<dbReference type="DNASU" id="2877"/>
<dbReference type="Ensembl" id="ENST00000389614.6">
    <property type="protein sequence ID" value="ENSP00000374265.5"/>
    <property type="gene ID" value="ENSG00000176153.13"/>
</dbReference>
<dbReference type="GeneID" id="2877"/>
<dbReference type="KEGG" id="hsa:2877"/>
<dbReference type="MANE-Select" id="ENST00000389614.6">
    <property type="protein sequence ID" value="ENSP00000374265.5"/>
    <property type="RefSeq nucleotide sequence ID" value="NM_002083.4"/>
    <property type="RefSeq protein sequence ID" value="NP_002074.2"/>
</dbReference>
<dbReference type="UCSC" id="uc021ruq.3">
    <property type="organism name" value="human"/>
</dbReference>
<dbReference type="AGR" id="HGNC:4554"/>
<dbReference type="CTD" id="2877"/>
<dbReference type="DisGeNET" id="2877"/>
<dbReference type="GeneCards" id="GPX2"/>
<dbReference type="HGNC" id="HGNC:4554">
    <property type="gene designation" value="GPX2"/>
</dbReference>
<dbReference type="HPA" id="ENSG00000176153">
    <property type="expression patterns" value="Tissue enhanced (gallbladder, intestine, liver, stomach, urinary bladder)"/>
</dbReference>
<dbReference type="MIM" id="138319">
    <property type="type" value="gene"/>
</dbReference>
<dbReference type="neXtProt" id="NX_P18283"/>
<dbReference type="OpenTargets" id="ENSG00000176153"/>
<dbReference type="PharmGKB" id="PA28950"/>
<dbReference type="VEuPathDB" id="HostDB:ENSG00000176153"/>
<dbReference type="eggNOG" id="KOG1651">
    <property type="taxonomic scope" value="Eukaryota"/>
</dbReference>
<dbReference type="GeneTree" id="ENSGT00940000160477"/>
<dbReference type="HOGENOM" id="CLU_029507_2_0_1"/>
<dbReference type="InParanoid" id="P18283"/>
<dbReference type="OMA" id="HRYDISW"/>
<dbReference type="OrthoDB" id="446890at2759"/>
<dbReference type="PAN-GO" id="P18283">
    <property type="GO annotations" value="1 GO annotation based on evolutionary models"/>
</dbReference>
<dbReference type="PhylomeDB" id="P18283"/>
<dbReference type="TreeFam" id="TF105318"/>
<dbReference type="BioCyc" id="MetaCyc:HS11006-MONOMER"/>
<dbReference type="BRENDA" id="1.11.1.9">
    <property type="organism ID" value="2681"/>
</dbReference>
<dbReference type="PathwayCommons" id="P18283"/>
<dbReference type="Reactome" id="R-HSA-2142688">
    <property type="pathway name" value="Synthesis of 5-eicosatetraenoic acids"/>
</dbReference>
<dbReference type="Reactome" id="R-HSA-2142712">
    <property type="pathway name" value="Synthesis of 12-eicosatetraenoic acid derivatives"/>
</dbReference>
<dbReference type="Reactome" id="R-HSA-2142770">
    <property type="pathway name" value="Synthesis of 15-eicosatetraenoic acid derivatives"/>
</dbReference>
<dbReference type="Reactome" id="R-HSA-3299685">
    <property type="pathway name" value="Detoxification of Reactive Oxygen Species"/>
</dbReference>
<dbReference type="Reactome" id="R-HSA-5628897">
    <property type="pathway name" value="TP53 Regulates Metabolic Genes"/>
</dbReference>
<dbReference type="SABIO-RK" id="P18283"/>
<dbReference type="SignaLink" id="P18283"/>
<dbReference type="BioGRID-ORCS" id="2877">
    <property type="hits" value="29 hits in 1160 CRISPR screens"/>
</dbReference>
<dbReference type="ChiTaRS" id="GPX2">
    <property type="organism name" value="human"/>
</dbReference>
<dbReference type="EvolutionaryTrace" id="P18283"/>
<dbReference type="GeneWiki" id="GPX2_(gene)"/>
<dbReference type="GenomeRNAi" id="2877"/>
<dbReference type="Pharos" id="P18283">
    <property type="development level" value="Tbio"/>
</dbReference>
<dbReference type="PRO" id="PR:P18283"/>
<dbReference type="Proteomes" id="UP000005640">
    <property type="component" value="Chromosome 14"/>
</dbReference>
<dbReference type="RNAct" id="P18283">
    <property type="molecule type" value="protein"/>
</dbReference>
<dbReference type="Bgee" id="ENSG00000176153">
    <property type="expression patterns" value="Expressed in gall bladder and 144 other cell types or tissues"/>
</dbReference>
<dbReference type="ExpressionAtlas" id="P18283">
    <property type="expression patterns" value="baseline and differential"/>
</dbReference>
<dbReference type="GO" id="GO:0005737">
    <property type="term" value="C:cytoplasm"/>
    <property type="evidence" value="ECO:0000304"/>
    <property type="project" value="ProtInc"/>
</dbReference>
<dbReference type="GO" id="GO:0005829">
    <property type="term" value="C:cytosol"/>
    <property type="evidence" value="ECO:0000314"/>
    <property type="project" value="UniProtKB"/>
</dbReference>
<dbReference type="GO" id="GO:0045171">
    <property type="term" value="C:intercellular bridge"/>
    <property type="evidence" value="ECO:0000314"/>
    <property type="project" value="HPA"/>
</dbReference>
<dbReference type="GO" id="GO:0072686">
    <property type="term" value="C:mitotic spindle"/>
    <property type="evidence" value="ECO:0000314"/>
    <property type="project" value="HPA"/>
</dbReference>
<dbReference type="GO" id="GO:0009055">
    <property type="term" value="F:electron transfer activity"/>
    <property type="evidence" value="ECO:0000304"/>
    <property type="project" value="UniProtKB"/>
</dbReference>
<dbReference type="GO" id="GO:0004602">
    <property type="term" value="F:glutathione peroxidase activity"/>
    <property type="evidence" value="ECO:0000314"/>
    <property type="project" value="UniProtKB"/>
</dbReference>
<dbReference type="GO" id="GO:0047066">
    <property type="term" value="F:phospholipid-hydroperoxide glutathione peroxidase activity"/>
    <property type="evidence" value="ECO:0000314"/>
    <property type="project" value="UniProtKB"/>
</dbReference>
<dbReference type="GO" id="GO:0006979">
    <property type="term" value="P:response to oxidative stress"/>
    <property type="evidence" value="ECO:0007669"/>
    <property type="project" value="InterPro"/>
</dbReference>
<dbReference type="CDD" id="cd00340">
    <property type="entry name" value="GSH_Peroxidase"/>
    <property type="match status" value="1"/>
</dbReference>
<dbReference type="FunFam" id="3.40.30.10:FF:000151">
    <property type="entry name" value="Glutathione peroxidase"/>
    <property type="match status" value="1"/>
</dbReference>
<dbReference type="Gene3D" id="3.40.30.10">
    <property type="entry name" value="Glutaredoxin"/>
    <property type="match status" value="1"/>
</dbReference>
<dbReference type="InterPro" id="IPR000889">
    <property type="entry name" value="Glutathione_peroxidase"/>
</dbReference>
<dbReference type="InterPro" id="IPR029759">
    <property type="entry name" value="GPX_AS"/>
</dbReference>
<dbReference type="InterPro" id="IPR029760">
    <property type="entry name" value="GPX_CS"/>
</dbReference>
<dbReference type="InterPro" id="IPR036249">
    <property type="entry name" value="Thioredoxin-like_sf"/>
</dbReference>
<dbReference type="PANTHER" id="PTHR11592">
    <property type="entry name" value="GLUTATHIONE PEROXIDASE"/>
    <property type="match status" value="1"/>
</dbReference>
<dbReference type="PANTHER" id="PTHR11592:SF36">
    <property type="entry name" value="GLUTATHIONE PEROXIDASE 2"/>
    <property type="match status" value="1"/>
</dbReference>
<dbReference type="Pfam" id="PF00255">
    <property type="entry name" value="GSHPx"/>
    <property type="match status" value="1"/>
</dbReference>
<dbReference type="PIRSF" id="PIRSF000303">
    <property type="entry name" value="Glutathion_perox"/>
    <property type="match status" value="1"/>
</dbReference>
<dbReference type="PRINTS" id="PR01011">
    <property type="entry name" value="GLUTPROXDASE"/>
</dbReference>
<dbReference type="SUPFAM" id="SSF52833">
    <property type="entry name" value="Thioredoxin-like"/>
    <property type="match status" value="1"/>
</dbReference>
<dbReference type="PROSITE" id="PS00460">
    <property type="entry name" value="GLUTATHIONE_PEROXID_1"/>
    <property type="match status" value="1"/>
</dbReference>
<dbReference type="PROSITE" id="PS00763">
    <property type="entry name" value="GLUTATHIONE_PEROXID_2"/>
    <property type="match status" value="1"/>
</dbReference>
<dbReference type="PROSITE" id="PS51355">
    <property type="entry name" value="GLUTATHIONE_PEROXID_3"/>
    <property type="match status" value="1"/>
</dbReference>
<name>GPX2_HUMAN</name>
<reference key="1">
    <citation type="journal article" date="1990" name="Nucleic Acids Res.">
        <title>A human cDNA sequence of a novel glutathione peroxidase-related protein.</title>
        <authorList>
            <person name="Akasaka M."/>
            <person name="Mizoguchi J."/>
            <person name="Takahashi K."/>
        </authorList>
    </citation>
    <scope>NUCLEOTIDE SEQUENCE [MRNA]</scope>
    <source>
        <tissue>Liver</tissue>
    </source>
</reference>
<reference key="2">
    <citation type="journal article" date="1993" name="J. Biol. Chem.">
        <title>Expression, characterization, and tissue distribution of a new cellular selenium-dependent glutathione peroxidase, GSHPx-GI.</title>
        <authorList>
            <person name="Chu F.-F."/>
            <person name="Doroshow J.H."/>
            <person name="Esworthy R.S."/>
        </authorList>
    </citation>
    <scope>NUCLEOTIDE SEQUENCE [MRNA]</scope>
    <scope>FUNCTION</scope>
    <scope>CATALYTIC ACTIVITY</scope>
    <scope>SUBCELLULAR LOCATION</scope>
    <scope>TISSUE SPECIFICITY</scope>
    <scope>SUBUNIT</scope>
    <source>
        <tissue>Liver</tissue>
    </source>
</reference>
<reference key="3">
    <citation type="journal article" date="2000" name="Gene">
        <title>Structural organization of the human gastrointestinal glutathione peroxidase (GPX2) promoter and 3'-nontranscribed region: transcriptional response to exogenous redox agents.</title>
        <authorList>
            <person name="Kelner M.J."/>
            <person name="Bagnell R.D."/>
            <person name="Montoya M.A."/>
            <person name="Lanham K.A."/>
        </authorList>
    </citation>
    <scope>NUCLEOTIDE SEQUENCE [GENOMIC DNA]</scope>
    <scope>VARIANT LEU-37</scope>
</reference>
<reference key="4">
    <citation type="submission" date="2004-10" db="EMBL/GenBank/DDBJ databases">
        <authorList>
            <consortium name="NIEHS SNPs program"/>
        </authorList>
    </citation>
    <scope>NUCLEOTIDE SEQUENCE [GENOMIC DNA]</scope>
    <scope>VARIANTS LEU-126 AND CYS-146</scope>
</reference>
<reference key="5">
    <citation type="journal article" date="2003" name="Nature">
        <title>The DNA sequence and analysis of human chromosome 14.</title>
        <authorList>
            <person name="Heilig R."/>
            <person name="Eckenberg R."/>
            <person name="Petit J.-L."/>
            <person name="Fonknechten N."/>
            <person name="Da Silva C."/>
            <person name="Cattolico L."/>
            <person name="Levy M."/>
            <person name="Barbe V."/>
            <person name="De Berardinis V."/>
            <person name="Ureta-Vidal A."/>
            <person name="Pelletier E."/>
            <person name="Vico V."/>
            <person name="Anthouard V."/>
            <person name="Rowen L."/>
            <person name="Madan A."/>
            <person name="Qin S."/>
            <person name="Sun H."/>
            <person name="Du H."/>
            <person name="Pepin K."/>
            <person name="Artiguenave F."/>
            <person name="Robert C."/>
            <person name="Cruaud C."/>
            <person name="Bruels T."/>
            <person name="Jaillon O."/>
            <person name="Friedlander L."/>
            <person name="Samson G."/>
            <person name="Brottier P."/>
            <person name="Cure S."/>
            <person name="Segurens B."/>
            <person name="Aniere F."/>
            <person name="Samain S."/>
            <person name="Crespeau H."/>
            <person name="Abbasi N."/>
            <person name="Aiach N."/>
            <person name="Boscus D."/>
            <person name="Dickhoff R."/>
            <person name="Dors M."/>
            <person name="Dubois I."/>
            <person name="Friedman C."/>
            <person name="Gouyvenoux M."/>
            <person name="James R."/>
            <person name="Madan A."/>
            <person name="Mairey-Estrada B."/>
            <person name="Mangenot S."/>
            <person name="Martins N."/>
            <person name="Menard M."/>
            <person name="Oztas S."/>
            <person name="Ratcliffe A."/>
            <person name="Shaffer T."/>
            <person name="Trask B."/>
            <person name="Vacherie B."/>
            <person name="Bellemere C."/>
            <person name="Belser C."/>
            <person name="Besnard-Gonnet M."/>
            <person name="Bartol-Mavel D."/>
            <person name="Boutard M."/>
            <person name="Briez-Silla S."/>
            <person name="Combette S."/>
            <person name="Dufosse-Laurent V."/>
            <person name="Ferron C."/>
            <person name="Lechaplais C."/>
            <person name="Louesse C."/>
            <person name="Muselet D."/>
            <person name="Magdelenat G."/>
            <person name="Pateau E."/>
            <person name="Petit E."/>
            <person name="Sirvain-Trukniewicz P."/>
            <person name="Trybou A."/>
            <person name="Vega-Czarny N."/>
            <person name="Bataille E."/>
            <person name="Bluet E."/>
            <person name="Bordelais I."/>
            <person name="Dubois M."/>
            <person name="Dumont C."/>
            <person name="Guerin T."/>
            <person name="Haffray S."/>
            <person name="Hammadi R."/>
            <person name="Muanga J."/>
            <person name="Pellouin V."/>
            <person name="Robert D."/>
            <person name="Wunderle E."/>
            <person name="Gauguet G."/>
            <person name="Roy A."/>
            <person name="Sainte-Marthe L."/>
            <person name="Verdier J."/>
            <person name="Verdier-Discala C."/>
            <person name="Hillier L.W."/>
            <person name="Fulton L."/>
            <person name="McPherson J."/>
            <person name="Matsuda F."/>
            <person name="Wilson R."/>
            <person name="Scarpelli C."/>
            <person name="Gyapay G."/>
            <person name="Wincker P."/>
            <person name="Saurin W."/>
            <person name="Quetier F."/>
            <person name="Waterston R."/>
            <person name="Hood L."/>
            <person name="Weissenbach J."/>
        </authorList>
    </citation>
    <scope>NUCLEOTIDE SEQUENCE [LARGE SCALE GENOMIC DNA]</scope>
</reference>
<reference key="6">
    <citation type="journal article" date="2004" name="Genome Res.">
        <title>The status, quality, and expansion of the NIH full-length cDNA project: the Mammalian Gene Collection (MGC).</title>
        <authorList>
            <consortium name="The MGC Project Team"/>
        </authorList>
    </citation>
    <scope>NUCLEOTIDE SEQUENCE [LARGE SCALE MRNA]</scope>
    <source>
        <tissue>Brain</tissue>
        <tissue>Prostate</tissue>
        <tissue>Urinary bladder</tissue>
    </source>
</reference>
<reference key="7">
    <citation type="journal article" date="2011" name="BMC Syst. Biol.">
        <title>Initial characterization of the human central proteome.</title>
        <authorList>
            <person name="Burkard T.R."/>
            <person name="Planyavsky M."/>
            <person name="Kaupe I."/>
            <person name="Breitwieser F.P."/>
            <person name="Buerckstuemmer T."/>
            <person name="Bennett K.L."/>
            <person name="Superti-Furga G."/>
            <person name="Colinge J."/>
        </authorList>
    </citation>
    <scope>IDENTIFICATION BY MASS SPECTROMETRY [LARGE SCALE ANALYSIS]</scope>
</reference>
<reference key="8">
    <citation type="journal article" date="2023" name="Redox Biol.">
        <title>Side-by-side comparison of recombinant human glutathione peroxidases identifies overlapping substrate specificities for soluble hydroperoxides.</title>
        <authorList>
            <person name="Schwarz M."/>
            <person name="Loeser A."/>
            <person name="Cheng Q."/>
            <person name="Wichmann-Costaganna M."/>
            <person name="Schaedel P."/>
            <person name="Werz O."/>
            <person name="Arner E.S."/>
            <person name="Kipp A.P."/>
        </authorList>
    </citation>
    <scope>FUNCTION</scope>
    <scope>CATALYTIC ACTIVITY</scope>
</reference>
<reference key="9">
    <citation type="submission" date="2009-02" db="PDB data bank">
        <title>Crystal structure of the selenocysteine to cysteine mutant of human glutathione peroxidase 2 (GPX2).</title>
        <authorList>
            <consortium name="Structural genomics consortium (SGC)"/>
        </authorList>
    </citation>
    <scope>X-RAY CRYSTALLOGRAPHY (2.1 ANGSTROMS) OF 4-188</scope>
</reference>
<gene>
    <name evidence="8 11" type="primary">GPX2</name>
</gene>
<sequence length="190" mass="21954">MAFIAKSFYDLSAISLDGEKVDFNTFRGRAVLIENVASLUGTTTRDFTQLNELQCRFPRRLVVLGFPCNQFGHQENCQNEEILNSLKYVRPGGGYQPTFTLVQKCEVNGQNEHPVFAYLKDKLPYPYDDPFSLMTDPKLIIWSPVRRSDVAWNFEKFLIGPEGEPFRRYSRTFPTINIEPDIKRLLKVAI</sequence>
<keyword id="KW-0002">3D-structure</keyword>
<keyword id="KW-0963">Cytoplasm</keyword>
<keyword id="KW-0560">Oxidoreductase</keyword>
<keyword id="KW-0575">Peroxidase</keyword>
<keyword id="KW-1267">Proteomics identification</keyword>
<keyword id="KW-1185">Reference proteome</keyword>
<keyword id="KW-0712">Selenocysteine</keyword>
<protein>
    <recommendedName>
        <fullName>Glutathione peroxidase 2</fullName>
        <shortName>GPx-2</shortName>
        <shortName>GSHPx-2</shortName>
        <ecNumber evidence="4">1.11.1.9</ecNumber>
    </recommendedName>
    <alternativeName>
        <fullName>Gastrointestinal glutathione peroxidase</fullName>
    </alternativeName>
    <alternativeName>
        <fullName evidence="7">Glutathione peroxidase-gastrointestinal</fullName>
        <shortName evidence="7">GPx-GI</shortName>
        <shortName evidence="7">GSHPx-GI</shortName>
    </alternativeName>
    <alternativeName>
        <fullName>Glutathione peroxidase-related protein 2</fullName>
        <shortName>GPRP-2</shortName>
    </alternativeName>
    <alternativeName>
        <fullName evidence="6">Phospholipid hydroperoxide glutathione peroxidase GPX2</fullName>
        <ecNumber evidence="3">1.11.1.12</ecNumber>
    </alternativeName>
</protein>
<comment type="function">
    <text evidence="3 4">Catalyzes the reduction of hydroperoxides in a glutathione-dependent manner thus regulating cellular redox homeostasis (PubMed:36608588, PubMed:8428933). Can reduce small soluble hydroperoxides such as H2O2, cumene hydroperoxide and tert-butyl hydroperoxide, as well as several fatty acid-derived hydroperoxides (PubMed:36608588, PubMed:8428933). Cannot reduce phosphatidycholine hydroperoxide (PubMed:8428933).</text>
</comment>
<comment type="catalytic activity">
    <reaction evidence="3 4">
        <text>2 glutathione + H2O2 = glutathione disulfide + 2 H2O</text>
        <dbReference type="Rhea" id="RHEA:16833"/>
        <dbReference type="ChEBI" id="CHEBI:15377"/>
        <dbReference type="ChEBI" id="CHEBI:16240"/>
        <dbReference type="ChEBI" id="CHEBI:57925"/>
        <dbReference type="ChEBI" id="CHEBI:58297"/>
        <dbReference type="EC" id="1.11.1.9"/>
    </reaction>
    <physiologicalReaction direction="left-to-right" evidence="4">
        <dbReference type="Rhea" id="RHEA:16834"/>
    </physiologicalReaction>
</comment>
<comment type="catalytic activity">
    <reaction evidence="3">
        <text>a hydroperoxy polyunsaturated fatty acid + 2 glutathione = a hydroxy polyunsaturated fatty acid + glutathione disulfide + H2O</text>
        <dbReference type="Rhea" id="RHEA:19057"/>
        <dbReference type="ChEBI" id="CHEBI:15377"/>
        <dbReference type="ChEBI" id="CHEBI:57925"/>
        <dbReference type="ChEBI" id="CHEBI:58297"/>
        <dbReference type="ChEBI" id="CHEBI:131871"/>
        <dbReference type="ChEBI" id="CHEBI:134019"/>
        <dbReference type="EC" id="1.11.1.12"/>
    </reaction>
    <physiologicalReaction direction="left-to-right" evidence="10">
        <dbReference type="Rhea" id="RHEA:19058"/>
    </physiologicalReaction>
</comment>
<comment type="catalytic activity">
    <reaction evidence="3 4">
        <text>tert-butyl hydroperoxide + 2 glutathione = tert-butanol + glutathione disulfide + H2O</text>
        <dbReference type="Rhea" id="RHEA:69412"/>
        <dbReference type="ChEBI" id="CHEBI:15377"/>
        <dbReference type="ChEBI" id="CHEBI:45895"/>
        <dbReference type="ChEBI" id="CHEBI:57925"/>
        <dbReference type="ChEBI" id="CHEBI:58297"/>
        <dbReference type="ChEBI" id="CHEBI:64090"/>
    </reaction>
    <physiologicalReaction direction="left-to-right" evidence="4">
        <dbReference type="Rhea" id="RHEA:69413"/>
    </physiologicalReaction>
</comment>
<comment type="catalytic activity">
    <reaction evidence="3 4">
        <text>cumene hydroperoxide + 2 glutathione = 2-phenylpropan-2-ol + glutathione disulfide + H2O</text>
        <dbReference type="Rhea" id="RHEA:69651"/>
        <dbReference type="ChEBI" id="CHEBI:15377"/>
        <dbReference type="ChEBI" id="CHEBI:57925"/>
        <dbReference type="ChEBI" id="CHEBI:58297"/>
        <dbReference type="ChEBI" id="CHEBI:78673"/>
        <dbReference type="ChEBI" id="CHEBI:131607"/>
    </reaction>
    <physiologicalReaction direction="left-to-right" evidence="4">
        <dbReference type="Rhea" id="RHEA:69652"/>
    </physiologicalReaction>
</comment>
<comment type="catalytic activity">
    <reaction evidence="3">
        <text>(13S)-hydroperoxy-(9Z,11E)-octadecadienoate + 2 glutathione = (13S)-hydroxy-(9Z,11E)-octadecadienoate + glutathione disulfide + H2O</text>
        <dbReference type="Rhea" id="RHEA:48888"/>
        <dbReference type="ChEBI" id="CHEBI:15377"/>
        <dbReference type="ChEBI" id="CHEBI:57466"/>
        <dbReference type="ChEBI" id="CHEBI:57925"/>
        <dbReference type="ChEBI" id="CHEBI:58297"/>
        <dbReference type="ChEBI" id="CHEBI:90850"/>
    </reaction>
    <physiologicalReaction direction="left-to-right" evidence="10">
        <dbReference type="Rhea" id="RHEA:48889"/>
    </physiologicalReaction>
</comment>
<comment type="catalytic activity">
    <reaction evidence="3">
        <text>(5S)-hydroperoxy-(6E,8Z,11Z,14Z)-eicosatetraenoate + 2 glutathione = (5S)-hydroxy-(6E,8Z,11Z,14Z)-eicosatetraenoate + glutathione disulfide + H2O</text>
        <dbReference type="Rhea" id="RHEA:48620"/>
        <dbReference type="ChEBI" id="CHEBI:15377"/>
        <dbReference type="ChEBI" id="CHEBI:57450"/>
        <dbReference type="ChEBI" id="CHEBI:57925"/>
        <dbReference type="ChEBI" id="CHEBI:58297"/>
        <dbReference type="ChEBI" id="CHEBI:90632"/>
    </reaction>
    <physiologicalReaction direction="left-to-right" evidence="10">
        <dbReference type="Rhea" id="RHEA:48621"/>
    </physiologicalReaction>
</comment>
<comment type="catalytic activity">
    <reaction evidence="3">
        <text>(12R)-hydroperoxy-(5Z,8Z,10E,14Z)-eicosatetraenoate + 2 glutathione = (12R)-hydroxy-(5Z,8Z,10E,14Z)-eicosatetraenoate + glutathione disulfide + H2O</text>
        <dbReference type="Rhea" id="RHEA:76691"/>
        <dbReference type="ChEBI" id="CHEBI:15377"/>
        <dbReference type="ChEBI" id="CHEBI:57925"/>
        <dbReference type="ChEBI" id="CHEBI:58297"/>
        <dbReference type="ChEBI" id="CHEBI:75230"/>
        <dbReference type="ChEBI" id="CHEBI:83343"/>
    </reaction>
    <physiologicalReaction direction="left-to-right" evidence="10">
        <dbReference type="Rhea" id="RHEA:76692"/>
    </physiologicalReaction>
</comment>
<comment type="catalytic activity">
    <reaction evidence="3">
        <text>(15S)-hydroperoxy-(5Z,8Z,11Z,13E)-eicosatetraenoate + 2 glutathione = (15S)-hydroxy-(5Z,8Z,11Z,13E)-eicosatetraenoate + glutathione disulfide + H2O</text>
        <dbReference type="Rhea" id="RHEA:76695"/>
        <dbReference type="ChEBI" id="CHEBI:15377"/>
        <dbReference type="ChEBI" id="CHEBI:57409"/>
        <dbReference type="ChEBI" id="CHEBI:57446"/>
        <dbReference type="ChEBI" id="CHEBI:57925"/>
        <dbReference type="ChEBI" id="CHEBI:58297"/>
    </reaction>
    <physiologicalReaction direction="left-to-right" evidence="10">
        <dbReference type="Rhea" id="RHEA:76696"/>
    </physiologicalReaction>
</comment>
<comment type="subunit">
    <text evidence="4">Homotetramer.</text>
</comment>
<comment type="subcellular location">
    <subcellularLocation>
        <location evidence="4">Cytoplasm</location>
        <location evidence="4">Cytosol</location>
    </subcellularLocation>
</comment>
<comment type="tissue specificity">
    <text evidence="4">Mostly in liver and gastrointestinal tract, not found in heart or kidney.</text>
</comment>
<comment type="similarity">
    <text evidence="9">Belongs to the glutathione peroxidase family.</text>
</comment>
<feature type="chain" id="PRO_0000066619" description="Glutathione peroxidase 2">
    <location>
        <begin position="1"/>
        <end position="190"/>
    </location>
</feature>
<feature type="active site" evidence="1">
    <location>
        <position position="40"/>
    </location>
</feature>
<feature type="non-standard amino acid" description="Selenocysteine" evidence="1">
    <location>
        <position position="40"/>
    </location>
</feature>
<feature type="sequence variant" id="VAR_003615" description="Requires 2 nucleotide substitutions." evidence="2">
    <original>A</original>
    <variation>L</variation>
    <location>
        <position position="37"/>
    </location>
</feature>
<feature type="sequence variant" id="VAR_020916" description="In dbSNP:rs17881652." evidence="5">
    <original>P</original>
    <variation>L</variation>
    <location>
        <position position="126"/>
    </location>
</feature>
<feature type="sequence variant" id="VAR_020917" description="In dbSNP:rs17880492." evidence="5">
    <original>R</original>
    <variation>C</variation>
    <location>
        <position position="146"/>
    </location>
</feature>
<feature type="sequence variant" id="VAR_003616">
    <original>I</original>
    <variation>M</variation>
    <location>
        <position position="176"/>
    </location>
</feature>
<feature type="sequence conflict" description="In Ref. 1; CAB43534." evidence="9" ref="1">
    <original>A</original>
    <variation>R</variation>
    <location>
        <position position="37"/>
    </location>
</feature>
<feature type="sequence conflict" description="In Ref. 1; CAB43534." evidence="9" ref="1">
    <original>C</original>
    <variation>S</variation>
    <location>
        <position position="77"/>
    </location>
</feature>
<feature type="helix" evidence="12">
    <location>
        <begin position="8"/>
        <end position="10"/>
    </location>
</feature>
<feature type="strand" evidence="12">
    <location>
        <begin position="12"/>
        <end position="15"/>
    </location>
</feature>
<feature type="strand" evidence="12">
    <location>
        <begin position="20"/>
        <end position="22"/>
    </location>
</feature>
<feature type="helix" evidence="12">
    <location>
        <begin position="23"/>
        <end position="26"/>
    </location>
</feature>
<feature type="strand" evidence="12">
    <location>
        <begin position="29"/>
        <end position="36"/>
    </location>
</feature>
<feature type="helix" evidence="12">
    <location>
        <begin position="43"/>
        <end position="56"/>
    </location>
</feature>
<feature type="turn" evidence="12">
    <location>
        <begin position="58"/>
        <end position="60"/>
    </location>
</feature>
<feature type="strand" evidence="12">
    <location>
        <begin position="61"/>
        <end position="68"/>
    </location>
</feature>
<feature type="helix" evidence="12">
    <location>
        <begin position="79"/>
        <end position="81"/>
    </location>
</feature>
<feature type="helix" evidence="12">
    <location>
        <begin position="82"/>
        <end position="88"/>
    </location>
</feature>
<feature type="strand" evidence="12">
    <location>
        <begin position="98"/>
        <end position="102"/>
    </location>
</feature>
<feature type="strand" evidence="12">
    <location>
        <begin position="105"/>
        <end position="109"/>
    </location>
</feature>
<feature type="helix" evidence="12">
    <location>
        <begin position="114"/>
        <end position="122"/>
    </location>
</feature>
<feature type="helix" evidence="12">
    <location>
        <begin position="137"/>
        <end position="139"/>
    </location>
</feature>
<feature type="strand" evidence="12">
    <location>
        <begin position="156"/>
        <end position="159"/>
    </location>
</feature>
<feature type="strand" evidence="12">
    <location>
        <begin position="165"/>
        <end position="169"/>
    </location>
</feature>
<feature type="helix" evidence="12">
    <location>
        <begin position="175"/>
        <end position="178"/>
    </location>
</feature>
<feature type="helix" evidence="12">
    <location>
        <begin position="179"/>
        <end position="186"/>
    </location>
</feature>
<proteinExistence type="evidence at protein level"/>